<dbReference type="EMBL" id="AAEY01000020">
    <property type="protein sequence ID" value="EAL21294.1"/>
    <property type="molecule type" value="Genomic_DNA"/>
</dbReference>
<dbReference type="RefSeq" id="XP_775941.1">
    <property type="nucleotide sequence ID" value="XM_770848.1"/>
</dbReference>
<dbReference type="SMR" id="P0CO45"/>
<dbReference type="EnsemblFungi" id="AAW42902">
    <property type="protein sequence ID" value="AAW42902"/>
    <property type="gene ID" value="CND02880"/>
</dbReference>
<dbReference type="GeneID" id="4935737"/>
<dbReference type="KEGG" id="cnb:CNBD3480"/>
<dbReference type="VEuPathDB" id="FungiDB:CNBD3480"/>
<dbReference type="HOGENOM" id="CLU_016864_3_1_1"/>
<dbReference type="OrthoDB" id="9140at5206"/>
<dbReference type="GO" id="GO:0000243">
    <property type="term" value="C:commitment complex"/>
    <property type="evidence" value="ECO:0007669"/>
    <property type="project" value="EnsemblFungi"/>
</dbReference>
<dbReference type="GO" id="GO:0005829">
    <property type="term" value="C:cytosol"/>
    <property type="evidence" value="ECO:0007669"/>
    <property type="project" value="EnsemblFungi"/>
</dbReference>
<dbReference type="GO" id="GO:0071004">
    <property type="term" value="C:U2-type prespliceosome"/>
    <property type="evidence" value="ECO:0007669"/>
    <property type="project" value="EnsemblFungi"/>
</dbReference>
<dbReference type="GO" id="GO:0003729">
    <property type="term" value="F:mRNA binding"/>
    <property type="evidence" value="ECO:0007669"/>
    <property type="project" value="TreeGrafter"/>
</dbReference>
<dbReference type="GO" id="GO:0008270">
    <property type="term" value="F:zinc ion binding"/>
    <property type="evidence" value="ECO:0007669"/>
    <property type="project" value="UniProtKB-KW"/>
</dbReference>
<dbReference type="GO" id="GO:0045292">
    <property type="term" value="P:mRNA cis splicing, via spliceosome"/>
    <property type="evidence" value="ECO:0007669"/>
    <property type="project" value="EnsemblFungi"/>
</dbReference>
<dbReference type="GO" id="GO:0048024">
    <property type="term" value="P:regulation of mRNA splicing, via spliceosome"/>
    <property type="evidence" value="ECO:0007669"/>
    <property type="project" value="TreeGrafter"/>
</dbReference>
<dbReference type="CDD" id="cd02395">
    <property type="entry name" value="KH-I_BBP"/>
    <property type="match status" value="1"/>
</dbReference>
<dbReference type="FunFam" id="4.10.60.10:FF:000030">
    <property type="entry name" value="Branchpoint-bridging protein"/>
    <property type="match status" value="1"/>
</dbReference>
<dbReference type="FunFam" id="3.30.1370.10:FF:000024">
    <property type="entry name" value="Branchpoint-bridging protein-like protein"/>
    <property type="match status" value="1"/>
</dbReference>
<dbReference type="Gene3D" id="6.10.140.1790">
    <property type="match status" value="1"/>
</dbReference>
<dbReference type="Gene3D" id="3.30.1370.10">
    <property type="entry name" value="K Homology domain, type 1"/>
    <property type="match status" value="1"/>
</dbReference>
<dbReference type="Gene3D" id="4.10.60.10">
    <property type="entry name" value="Zinc finger, CCHC-type"/>
    <property type="match status" value="1"/>
</dbReference>
<dbReference type="InterPro" id="IPR045071">
    <property type="entry name" value="BBP-like"/>
</dbReference>
<dbReference type="InterPro" id="IPR055256">
    <property type="entry name" value="KH_1_KHDC4/BBP-like"/>
</dbReference>
<dbReference type="InterPro" id="IPR004087">
    <property type="entry name" value="KH_dom"/>
</dbReference>
<dbReference type="InterPro" id="IPR036612">
    <property type="entry name" value="KH_dom_type_1_sf"/>
</dbReference>
<dbReference type="InterPro" id="IPR032570">
    <property type="entry name" value="SF1-HH"/>
</dbReference>
<dbReference type="InterPro" id="IPR047086">
    <property type="entry name" value="SF1-HH_sf"/>
</dbReference>
<dbReference type="InterPro" id="IPR001878">
    <property type="entry name" value="Znf_CCHC"/>
</dbReference>
<dbReference type="InterPro" id="IPR036875">
    <property type="entry name" value="Znf_CCHC_sf"/>
</dbReference>
<dbReference type="PANTHER" id="PTHR11208">
    <property type="entry name" value="RNA-BINDING PROTEIN RELATED"/>
    <property type="match status" value="1"/>
</dbReference>
<dbReference type="PANTHER" id="PTHR11208:SF45">
    <property type="entry name" value="SPLICING FACTOR 1"/>
    <property type="match status" value="1"/>
</dbReference>
<dbReference type="Pfam" id="PF22675">
    <property type="entry name" value="KH-I_KHDC4-BBP"/>
    <property type="match status" value="1"/>
</dbReference>
<dbReference type="Pfam" id="PF16275">
    <property type="entry name" value="SF1-HH"/>
    <property type="match status" value="1"/>
</dbReference>
<dbReference type="Pfam" id="PF00098">
    <property type="entry name" value="zf-CCHC"/>
    <property type="match status" value="1"/>
</dbReference>
<dbReference type="Pfam" id="PF13917">
    <property type="entry name" value="zf-CCHC_3"/>
    <property type="match status" value="1"/>
</dbReference>
<dbReference type="SMART" id="SM00322">
    <property type="entry name" value="KH"/>
    <property type="match status" value="1"/>
</dbReference>
<dbReference type="SMART" id="SM00343">
    <property type="entry name" value="ZnF_C2HC"/>
    <property type="match status" value="2"/>
</dbReference>
<dbReference type="SUPFAM" id="SSF54791">
    <property type="entry name" value="Eukaryotic type KH-domain (KH-domain type I)"/>
    <property type="match status" value="1"/>
</dbReference>
<dbReference type="SUPFAM" id="SSF57756">
    <property type="entry name" value="Retrovirus zinc finger-like domains"/>
    <property type="match status" value="1"/>
</dbReference>
<dbReference type="PROSITE" id="PS50084">
    <property type="entry name" value="KH_TYPE_1"/>
    <property type="match status" value="1"/>
</dbReference>
<dbReference type="PROSITE" id="PS50158">
    <property type="entry name" value="ZF_CCHC"/>
    <property type="match status" value="2"/>
</dbReference>
<evidence type="ECO:0000250" key="1"/>
<evidence type="ECO:0000255" key="2">
    <source>
        <dbReference type="PROSITE-ProRule" id="PRU00047"/>
    </source>
</evidence>
<evidence type="ECO:0000255" key="3">
    <source>
        <dbReference type="PROSITE-ProRule" id="PRU00117"/>
    </source>
</evidence>
<evidence type="ECO:0000256" key="4">
    <source>
        <dbReference type="SAM" id="MobiDB-lite"/>
    </source>
</evidence>
<evidence type="ECO:0000305" key="5"/>
<feature type="chain" id="PRO_0000410127" description="Branchpoint-bridging protein">
    <location>
        <begin position="1"/>
        <end position="546"/>
    </location>
</feature>
<feature type="domain" description="KH" evidence="3">
    <location>
        <begin position="251"/>
        <end position="330"/>
    </location>
</feature>
<feature type="zinc finger region" description="CCHC-type 1" evidence="2">
    <location>
        <begin position="368"/>
        <end position="385"/>
    </location>
</feature>
<feature type="zinc finger region" description="CCHC-type 2" evidence="2">
    <location>
        <begin position="393"/>
        <end position="410"/>
    </location>
</feature>
<feature type="region of interest" description="Disordered" evidence="4">
    <location>
        <begin position="1"/>
        <end position="141"/>
    </location>
</feature>
<feature type="region of interest" description="Disordered" evidence="4">
    <location>
        <begin position="178"/>
        <end position="199"/>
    </location>
</feature>
<feature type="compositionally biased region" description="Basic and acidic residues" evidence="4">
    <location>
        <begin position="50"/>
        <end position="128"/>
    </location>
</feature>
<proteinExistence type="inferred from homology"/>
<sequence length="546" mass="60795">MWRPAAKTTGTNDVPLANKRRFGLPEEGPPSNSPSYAPRPAADIQYFNGRQERERDARDDRERPRDDYDRRRDDYVRDDRDRRYDDYPRDGHSDRRDERSKWDEGDRREAPRGRERSRDRGDSNEDGPRKRRSRWGDASAKVNVPGMPVAVMGNVSQTELDNYAIHVRLEEINRKLRTGDVVPPEGQRSPSPTPQYDAYGRRTNTRELRYRKKLEDERTRLIDRAVKSDPNFRPPVDFQHKRGSRPQDKVYIPVKEFPEINFFGLLVGPRGNSLKKMERESGAKISIRGKGSVKEGKGRAGNFPQDEEDELHCLITADDESKVKTCVALINKVIETAASTPEGENDHKRNQLRELASLNGTLRDDENQLCQNCGEKGHRRWECPQQRVYSANVICRICGGAGHMARDCRGRGDPSLTQNKQTAFDSEYTALMAELGEGGGSTPGSAPAAAIGAPGAIPPQSRVPPWRLPENWQTNSGGFRGPPNFQAQGYQQAAPGAAAYGQQAYPGYAGYQTGAVSGYGSPATGGADAYAAYYASMGQQAPAAAV</sequence>
<reference key="1">
    <citation type="journal article" date="2005" name="Science">
        <title>The genome of the basidiomycetous yeast and human pathogen Cryptococcus neoformans.</title>
        <authorList>
            <person name="Loftus B.J."/>
            <person name="Fung E."/>
            <person name="Roncaglia P."/>
            <person name="Rowley D."/>
            <person name="Amedeo P."/>
            <person name="Bruno D."/>
            <person name="Vamathevan J."/>
            <person name="Miranda M."/>
            <person name="Anderson I.J."/>
            <person name="Fraser J.A."/>
            <person name="Allen J.E."/>
            <person name="Bosdet I.E."/>
            <person name="Brent M.R."/>
            <person name="Chiu R."/>
            <person name="Doering T.L."/>
            <person name="Donlin M.J."/>
            <person name="D'Souza C.A."/>
            <person name="Fox D.S."/>
            <person name="Grinberg V."/>
            <person name="Fu J."/>
            <person name="Fukushima M."/>
            <person name="Haas B.J."/>
            <person name="Huang J.C."/>
            <person name="Janbon G."/>
            <person name="Jones S.J.M."/>
            <person name="Koo H.L."/>
            <person name="Krzywinski M.I."/>
            <person name="Kwon-Chung K.J."/>
            <person name="Lengeler K.B."/>
            <person name="Maiti R."/>
            <person name="Marra M.A."/>
            <person name="Marra R.E."/>
            <person name="Mathewson C.A."/>
            <person name="Mitchell T.G."/>
            <person name="Pertea M."/>
            <person name="Riggs F.R."/>
            <person name="Salzberg S.L."/>
            <person name="Schein J.E."/>
            <person name="Shvartsbeyn A."/>
            <person name="Shin H."/>
            <person name="Shumway M."/>
            <person name="Specht C.A."/>
            <person name="Suh B.B."/>
            <person name="Tenney A."/>
            <person name="Utterback T.R."/>
            <person name="Wickes B.L."/>
            <person name="Wortman J.R."/>
            <person name="Wye N.H."/>
            <person name="Kronstad J.W."/>
            <person name="Lodge J.K."/>
            <person name="Heitman J."/>
            <person name="Davis R.W."/>
            <person name="Fraser C.M."/>
            <person name="Hyman R.W."/>
        </authorList>
    </citation>
    <scope>NUCLEOTIDE SEQUENCE [LARGE SCALE GENOMIC DNA]</scope>
    <source>
        <strain>B-3501A</strain>
    </source>
</reference>
<gene>
    <name type="primary">BBP</name>
    <name type="ordered locus">CNBD3480</name>
</gene>
<organism>
    <name type="scientific">Cryptococcus neoformans var. neoformans serotype D (strain B-3501A)</name>
    <name type="common">Filobasidiella neoformans</name>
    <dbReference type="NCBI Taxonomy" id="283643"/>
    <lineage>
        <taxon>Eukaryota</taxon>
        <taxon>Fungi</taxon>
        <taxon>Dikarya</taxon>
        <taxon>Basidiomycota</taxon>
        <taxon>Agaricomycotina</taxon>
        <taxon>Tremellomycetes</taxon>
        <taxon>Tremellales</taxon>
        <taxon>Cryptococcaceae</taxon>
        <taxon>Cryptococcus</taxon>
        <taxon>Cryptococcus neoformans species complex</taxon>
    </lineage>
</organism>
<name>BBP_CRYNB</name>
<comment type="function">
    <text evidence="1">Necessary for the splicing of pre-mRNA. Has a role in the recognition of the branch site (5'-UACUAAC-3'), the pyrimidine tract and the 3'-splice site at the 3'-end of introns (By similarity).</text>
</comment>
<comment type="subcellular location">
    <subcellularLocation>
        <location evidence="1">Nucleus</location>
    </subcellularLocation>
</comment>
<comment type="similarity">
    <text evidence="5">Belongs to the BBP/SF1 family.</text>
</comment>
<protein>
    <recommendedName>
        <fullName>Branchpoint-bridging protein</fullName>
    </recommendedName>
</protein>
<keyword id="KW-0479">Metal-binding</keyword>
<keyword id="KW-0507">mRNA processing</keyword>
<keyword id="KW-0508">mRNA splicing</keyword>
<keyword id="KW-0539">Nucleus</keyword>
<keyword id="KW-0677">Repeat</keyword>
<keyword id="KW-0694">RNA-binding</keyword>
<keyword id="KW-0747">Spliceosome</keyword>
<keyword id="KW-0862">Zinc</keyword>
<keyword id="KW-0863">Zinc-finger</keyword>
<accession>P0CO45</accession>
<accession>Q55TV5</accession>
<accession>Q5KII2</accession>